<feature type="chain" id="PRO_1000094189" description="Transcription elongation factor GreA">
    <location>
        <begin position="1"/>
        <end position="158"/>
    </location>
</feature>
<proteinExistence type="inferred from homology"/>
<dbReference type="EMBL" id="CP001074">
    <property type="protein sequence ID" value="ACE92084.1"/>
    <property type="molecule type" value="Genomic_DNA"/>
</dbReference>
<dbReference type="SMR" id="B3PUK3"/>
<dbReference type="KEGG" id="rec:RHECIAT_CH0003136"/>
<dbReference type="eggNOG" id="COG0782">
    <property type="taxonomic scope" value="Bacteria"/>
</dbReference>
<dbReference type="HOGENOM" id="CLU_101379_2_0_5"/>
<dbReference type="Proteomes" id="UP000008817">
    <property type="component" value="Chromosome"/>
</dbReference>
<dbReference type="GO" id="GO:0003677">
    <property type="term" value="F:DNA binding"/>
    <property type="evidence" value="ECO:0007669"/>
    <property type="project" value="UniProtKB-UniRule"/>
</dbReference>
<dbReference type="GO" id="GO:0070063">
    <property type="term" value="F:RNA polymerase binding"/>
    <property type="evidence" value="ECO:0007669"/>
    <property type="project" value="InterPro"/>
</dbReference>
<dbReference type="GO" id="GO:0006354">
    <property type="term" value="P:DNA-templated transcription elongation"/>
    <property type="evidence" value="ECO:0007669"/>
    <property type="project" value="TreeGrafter"/>
</dbReference>
<dbReference type="GO" id="GO:0032784">
    <property type="term" value="P:regulation of DNA-templated transcription elongation"/>
    <property type="evidence" value="ECO:0007669"/>
    <property type="project" value="UniProtKB-UniRule"/>
</dbReference>
<dbReference type="FunFam" id="1.10.287.180:FF:000001">
    <property type="entry name" value="Transcription elongation factor GreA"/>
    <property type="match status" value="1"/>
</dbReference>
<dbReference type="FunFam" id="3.10.50.30:FF:000001">
    <property type="entry name" value="Transcription elongation factor GreA"/>
    <property type="match status" value="1"/>
</dbReference>
<dbReference type="Gene3D" id="3.10.50.30">
    <property type="entry name" value="Transcription elongation factor, GreA/GreB, C-terminal domain"/>
    <property type="match status" value="1"/>
</dbReference>
<dbReference type="Gene3D" id="1.10.287.180">
    <property type="entry name" value="Transcription elongation factor, GreA/GreB, N-terminal domain"/>
    <property type="match status" value="1"/>
</dbReference>
<dbReference type="HAMAP" id="MF_00105">
    <property type="entry name" value="GreA_GreB"/>
    <property type="match status" value="1"/>
</dbReference>
<dbReference type="InterPro" id="IPR036953">
    <property type="entry name" value="GreA/GreB_C_sf"/>
</dbReference>
<dbReference type="InterPro" id="IPR018151">
    <property type="entry name" value="TF_GreA/GreB_CS"/>
</dbReference>
<dbReference type="InterPro" id="IPR006359">
    <property type="entry name" value="Tscrpt_elong_fac_GreA"/>
</dbReference>
<dbReference type="InterPro" id="IPR028624">
    <property type="entry name" value="Tscrpt_elong_fac_GreA/B"/>
</dbReference>
<dbReference type="InterPro" id="IPR001437">
    <property type="entry name" value="Tscrpt_elong_fac_GreA/B_C"/>
</dbReference>
<dbReference type="InterPro" id="IPR023459">
    <property type="entry name" value="Tscrpt_elong_fac_GreA/B_fam"/>
</dbReference>
<dbReference type="InterPro" id="IPR022691">
    <property type="entry name" value="Tscrpt_elong_fac_GreA/B_N"/>
</dbReference>
<dbReference type="InterPro" id="IPR036805">
    <property type="entry name" value="Tscrpt_elong_fac_GreA/B_N_sf"/>
</dbReference>
<dbReference type="NCBIfam" id="TIGR01462">
    <property type="entry name" value="greA"/>
    <property type="match status" value="1"/>
</dbReference>
<dbReference type="NCBIfam" id="NF001261">
    <property type="entry name" value="PRK00226.1-2"/>
    <property type="match status" value="1"/>
</dbReference>
<dbReference type="NCBIfam" id="NF001263">
    <property type="entry name" value="PRK00226.1-4"/>
    <property type="match status" value="1"/>
</dbReference>
<dbReference type="NCBIfam" id="NF001264">
    <property type="entry name" value="PRK00226.1-5"/>
    <property type="match status" value="1"/>
</dbReference>
<dbReference type="PANTHER" id="PTHR30437">
    <property type="entry name" value="TRANSCRIPTION ELONGATION FACTOR GREA"/>
    <property type="match status" value="1"/>
</dbReference>
<dbReference type="PANTHER" id="PTHR30437:SF4">
    <property type="entry name" value="TRANSCRIPTION ELONGATION FACTOR GREA"/>
    <property type="match status" value="1"/>
</dbReference>
<dbReference type="Pfam" id="PF01272">
    <property type="entry name" value="GreA_GreB"/>
    <property type="match status" value="1"/>
</dbReference>
<dbReference type="Pfam" id="PF03449">
    <property type="entry name" value="GreA_GreB_N"/>
    <property type="match status" value="1"/>
</dbReference>
<dbReference type="PIRSF" id="PIRSF006092">
    <property type="entry name" value="GreA_GreB"/>
    <property type="match status" value="1"/>
</dbReference>
<dbReference type="SUPFAM" id="SSF54534">
    <property type="entry name" value="FKBP-like"/>
    <property type="match status" value="1"/>
</dbReference>
<dbReference type="SUPFAM" id="SSF46557">
    <property type="entry name" value="GreA transcript cleavage protein, N-terminal domain"/>
    <property type="match status" value="1"/>
</dbReference>
<dbReference type="PROSITE" id="PS00829">
    <property type="entry name" value="GREAB_1"/>
    <property type="match status" value="1"/>
</dbReference>
<dbReference type="PROSITE" id="PS00830">
    <property type="entry name" value="GREAB_2"/>
    <property type="match status" value="1"/>
</dbReference>
<comment type="function">
    <text evidence="1">Necessary for efficient RNA polymerase transcription elongation past template-encoded arresting sites. The arresting sites in DNA have the property of trapping a certain fraction of elongating RNA polymerases that pass through, resulting in locked ternary complexes. Cleavage of the nascent transcript by cleavage factors such as GreA or GreB allows the resumption of elongation from the new 3'terminus. GreA releases sequences of 2 to 3 nucleotides.</text>
</comment>
<comment type="similarity">
    <text evidence="1">Belongs to the GreA/GreB family.</text>
</comment>
<gene>
    <name evidence="1" type="primary">greA</name>
    <name type="ordered locus">RHECIAT_CH0003136</name>
</gene>
<sequence length="158" mass="17462">MVDKVPMTQGGFVKLQEELRWRQQEERPRIIEAIAEARAHGDLSENAEYHAAKEAQSHNEGRITELEDLTARAEVIDLTKMSGDKIKFGAKVKLVDEDTEEEKTYQIVGDQEADVKAGRISISSPIARALIGKEVGDSIEVNAPGGSKAYEILQVSWG</sequence>
<organism>
    <name type="scientific">Rhizobium etli (strain CIAT 652)</name>
    <dbReference type="NCBI Taxonomy" id="491916"/>
    <lineage>
        <taxon>Bacteria</taxon>
        <taxon>Pseudomonadati</taxon>
        <taxon>Pseudomonadota</taxon>
        <taxon>Alphaproteobacteria</taxon>
        <taxon>Hyphomicrobiales</taxon>
        <taxon>Rhizobiaceae</taxon>
        <taxon>Rhizobium/Agrobacterium group</taxon>
        <taxon>Rhizobium</taxon>
    </lineage>
</organism>
<reference key="1">
    <citation type="journal article" date="2010" name="Appl. Environ. Microbiol.">
        <title>Conserved symbiotic plasmid DNA sequences in the multireplicon pangenomic structure of Rhizobium etli.</title>
        <authorList>
            <person name="Gonzalez V."/>
            <person name="Acosta J.L."/>
            <person name="Santamaria R.I."/>
            <person name="Bustos P."/>
            <person name="Fernandez J.L."/>
            <person name="Hernandez Gonzalez I.L."/>
            <person name="Diaz R."/>
            <person name="Flores M."/>
            <person name="Palacios R."/>
            <person name="Mora J."/>
            <person name="Davila G."/>
        </authorList>
    </citation>
    <scope>NUCLEOTIDE SEQUENCE [LARGE SCALE GENOMIC DNA]</scope>
    <source>
        <strain>CIAT 652</strain>
    </source>
</reference>
<keyword id="KW-0238">DNA-binding</keyword>
<keyword id="KW-0804">Transcription</keyword>
<keyword id="KW-0805">Transcription regulation</keyword>
<accession>B3PUK3</accession>
<protein>
    <recommendedName>
        <fullName evidence="1">Transcription elongation factor GreA</fullName>
    </recommendedName>
    <alternativeName>
        <fullName evidence="1">Transcript cleavage factor GreA</fullName>
    </alternativeName>
</protein>
<name>GREA_RHIE6</name>
<evidence type="ECO:0000255" key="1">
    <source>
        <dbReference type="HAMAP-Rule" id="MF_00105"/>
    </source>
</evidence>